<reference key="1">
    <citation type="submission" date="2006-04" db="EMBL/GenBank/DDBJ databases">
        <authorList>
            <consortium name="NIH - Mammalian Gene Collection (MGC) project"/>
        </authorList>
    </citation>
    <scope>NUCLEOTIDE SEQUENCE [LARGE SCALE MRNA]</scope>
    <source>
        <strain>Hereford</strain>
        <tissue>Uterus</tissue>
    </source>
</reference>
<gene>
    <name type="primary">EFTUD2</name>
    <name type="synonym">SNRP116</name>
</gene>
<dbReference type="EMBL" id="BC114717">
    <property type="protein sequence ID" value="AAI14718.1"/>
    <property type="molecule type" value="mRNA"/>
</dbReference>
<dbReference type="RefSeq" id="NP_001076865.1">
    <property type="nucleotide sequence ID" value="NM_001083396.1"/>
</dbReference>
<dbReference type="SMR" id="A4FUD3"/>
<dbReference type="FunCoup" id="A4FUD3">
    <property type="interactions" value="3702"/>
</dbReference>
<dbReference type="STRING" id="9913.ENSBTAP00000068978"/>
<dbReference type="PaxDb" id="9913-ENSBTAP00000017986"/>
<dbReference type="GeneID" id="509425"/>
<dbReference type="KEGG" id="bta:509425"/>
<dbReference type="CTD" id="9343"/>
<dbReference type="eggNOG" id="KOG0468">
    <property type="taxonomic scope" value="Eukaryota"/>
</dbReference>
<dbReference type="InParanoid" id="A4FUD3"/>
<dbReference type="OrthoDB" id="364892at2759"/>
<dbReference type="Proteomes" id="UP000009136">
    <property type="component" value="Unplaced"/>
</dbReference>
<dbReference type="GO" id="GO:0005829">
    <property type="term" value="C:cytosol"/>
    <property type="evidence" value="ECO:0000318"/>
    <property type="project" value="GO_Central"/>
</dbReference>
<dbReference type="GO" id="GO:0005634">
    <property type="term" value="C:nucleus"/>
    <property type="evidence" value="ECO:0000250"/>
    <property type="project" value="UniProtKB"/>
</dbReference>
<dbReference type="GO" id="GO:0071007">
    <property type="term" value="C:U2-type catalytic step 2 spliceosome"/>
    <property type="evidence" value="ECO:0000250"/>
    <property type="project" value="UniProtKB"/>
</dbReference>
<dbReference type="GO" id="GO:0071005">
    <property type="term" value="C:U2-type precatalytic spliceosome"/>
    <property type="evidence" value="ECO:0000250"/>
    <property type="project" value="UniProtKB"/>
</dbReference>
<dbReference type="GO" id="GO:0046540">
    <property type="term" value="C:U4/U6 x U5 tri-snRNP complex"/>
    <property type="evidence" value="ECO:0000318"/>
    <property type="project" value="GO_Central"/>
</dbReference>
<dbReference type="GO" id="GO:0005525">
    <property type="term" value="F:GTP binding"/>
    <property type="evidence" value="ECO:0007669"/>
    <property type="project" value="UniProtKB-KW"/>
</dbReference>
<dbReference type="GO" id="GO:0003924">
    <property type="term" value="F:GTPase activity"/>
    <property type="evidence" value="ECO:0000318"/>
    <property type="project" value="GO_Central"/>
</dbReference>
<dbReference type="GO" id="GO:0030623">
    <property type="term" value="F:U5 snRNA binding"/>
    <property type="evidence" value="ECO:0000318"/>
    <property type="project" value="GO_Central"/>
</dbReference>
<dbReference type="GO" id="GO:0000398">
    <property type="term" value="P:mRNA splicing, via spliceosome"/>
    <property type="evidence" value="ECO:0000250"/>
    <property type="project" value="UniProtKB"/>
</dbReference>
<dbReference type="CDD" id="cd04098">
    <property type="entry name" value="eEF2_C_snRNP"/>
    <property type="match status" value="1"/>
</dbReference>
<dbReference type="CDD" id="cd04090">
    <property type="entry name" value="EF2_II_snRNP"/>
    <property type="match status" value="1"/>
</dbReference>
<dbReference type="CDD" id="cd01683">
    <property type="entry name" value="EF2_IV_snRNP"/>
    <property type="match status" value="1"/>
</dbReference>
<dbReference type="CDD" id="cd16264">
    <property type="entry name" value="snRNP_III"/>
    <property type="match status" value="1"/>
</dbReference>
<dbReference type="CDD" id="cd04167">
    <property type="entry name" value="Snu114p"/>
    <property type="match status" value="1"/>
</dbReference>
<dbReference type="FunFam" id="3.30.70.240:FF:000004">
    <property type="entry name" value="116 kDa U5 small nuclear ribonucleoprotein"/>
    <property type="match status" value="1"/>
</dbReference>
<dbReference type="FunFam" id="2.40.30.10:FF:000029">
    <property type="entry name" value="116 kDa U5 small nuclear ribonucleoprotein component"/>
    <property type="match status" value="1"/>
</dbReference>
<dbReference type="FunFam" id="3.30.230.10:FF:000009">
    <property type="entry name" value="116 kDa U5 small nuclear ribonucleoprotein component"/>
    <property type="match status" value="1"/>
</dbReference>
<dbReference type="FunFam" id="3.40.50.300:FF:000574">
    <property type="entry name" value="116 kDa U5 small nuclear ribonucleoprotein component"/>
    <property type="match status" value="1"/>
</dbReference>
<dbReference type="FunFam" id="3.90.1430.10:FF:000001">
    <property type="entry name" value="116 kDa U5 small nuclear ribonucleoprotein component"/>
    <property type="match status" value="1"/>
</dbReference>
<dbReference type="FunFam" id="3.30.70.870:FF:000002">
    <property type="entry name" value="Translation elongation factor 2"/>
    <property type="match status" value="1"/>
</dbReference>
<dbReference type="Gene3D" id="3.30.230.10">
    <property type="match status" value="1"/>
</dbReference>
<dbReference type="Gene3D" id="3.30.70.240">
    <property type="match status" value="1"/>
</dbReference>
<dbReference type="Gene3D" id="3.30.70.870">
    <property type="entry name" value="Elongation Factor G (Translational Gtpase), domain 3"/>
    <property type="match status" value="1"/>
</dbReference>
<dbReference type="Gene3D" id="3.40.50.300">
    <property type="entry name" value="P-loop containing nucleotide triphosphate hydrolases"/>
    <property type="match status" value="1"/>
</dbReference>
<dbReference type="Gene3D" id="2.40.30.10">
    <property type="entry name" value="Translation factors"/>
    <property type="match status" value="1"/>
</dbReference>
<dbReference type="Gene3D" id="3.90.1430.10">
    <property type="entry name" value="Yeast translation eEF2 (G' domain)"/>
    <property type="match status" value="1"/>
</dbReference>
<dbReference type="InterPro" id="IPR041095">
    <property type="entry name" value="EFG_II"/>
</dbReference>
<dbReference type="InterPro" id="IPR035647">
    <property type="entry name" value="EFG_III/V"/>
</dbReference>
<dbReference type="InterPro" id="IPR000640">
    <property type="entry name" value="EFG_V-like"/>
</dbReference>
<dbReference type="InterPro" id="IPR004161">
    <property type="entry name" value="EFTu-like_2"/>
</dbReference>
<dbReference type="InterPro" id="IPR031950">
    <property type="entry name" value="EFTUD2_N"/>
</dbReference>
<dbReference type="InterPro" id="IPR027417">
    <property type="entry name" value="P-loop_NTPase"/>
</dbReference>
<dbReference type="InterPro" id="IPR020568">
    <property type="entry name" value="Ribosomal_Su5_D2-typ_SF"/>
</dbReference>
<dbReference type="InterPro" id="IPR014721">
    <property type="entry name" value="Ribsml_uS5_D2-typ_fold_subgr"/>
</dbReference>
<dbReference type="InterPro" id="IPR005225">
    <property type="entry name" value="Small_GTP-bd"/>
</dbReference>
<dbReference type="InterPro" id="IPR044121">
    <property type="entry name" value="Snu114_GTP-bd"/>
</dbReference>
<dbReference type="InterPro" id="IPR000795">
    <property type="entry name" value="T_Tr_GTP-bd_dom"/>
</dbReference>
<dbReference type="InterPro" id="IPR009000">
    <property type="entry name" value="Transl_B-barrel_sf"/>
</dbReference>
<dbReference type="InterPro" id="IPR005517">
    <property type="entry name" value="Transl_elong_EFG/EF2_IV"/>
</dbReference>
<dbReference type="InterPro" id="IPR035655">
    <property type="entry name" value="U5-116kDa_C"/>
</dbReference>
<dbReference type="NCBIfam" id="TIGR00231">
    <property type="entry name" value="small_GTP"/>
    <property type="match status" value="1"/>
</dbReference>
<dbReference type="PANTHER" id="PTHR42908:SF6">
    <property type="entry name" value="116 KDA U5 SMALL NUCLEAR RIBONUCLEOPROTEIN COMPONENT"/>
    <property type="match status" value="1"/>
</dbReference>
<dbReference type="PANTHER" id="PTHR42908">
    <property type="entry name" value="TRANSLATION ELONGATION FACTOR-RELATED"/>
    <property type="match status" value="1"/>
</dbReference>
<dbReference type="Pfam" id="PF00679">
    <property type="entry name" value="EFG_C"/>
    <property type="match status" value="1"/>
</dbReference>
<dbReference type="Pfam" id="PF14492">
    <property type="entry name" value="EFG_III"/>
    <property type="match status" value="1"/>
</dbReference>
<dbReference type="Pfam" id="PF03764">
    <property type="entry name" value="EFG_IV"/>
    <property type="match status" value="1"/>
</dbReference>
<dbReference type="Pfam" id="PF16004">
    <property type="entry name" value="EFTUD2"/>
    <property type="match status" value="1"/>
</dbReference>
<dbReference type="Pfam" id="PF00009">
    <property type="entry name" value="GTP_EFTU"/>
    <property type="match status" value="1"/>
</dbReference>
<dbReference type="Pfam" id="PF03144">
    <property type="entry name" value="GTP_EFTU_D2"/>
    <property type="match status" value="1"/>
</dbReference>
<dbReference type="PRINTS" id="PR00315">
    <property type="entry name" value="ELONGATNFCT"/>
</dbReference>
<dbReference type="SMART" id="SM00838">
    <property type="entry name" value="EFG_C"/>
    <property type="match status" value="1"/>
</dbReference>
<dbReference type="SMART" id="SM00889">
    <property type="entry name" value="EFG_IV"/>
    <property type="match status" value="1"/>
</dbReference>
<dbReference type="SUPFAM" id="SSF54980">
    <property type="entry name" value="EF-G C-terminal domain-like"/>
    <property type="match status" value="2"/>
</dbReference>
<dbReference type="SUPFAM" id="SSF52540">
    <property type="entry name" value="P-loop containing nucleoside triphosphate hydrolases"/>
    <property type="match status" value="1"/>
</dbReference>
<dbReference type="SUPFAM" id="SSF54211">
    <property type="entry name" value="Ribosomal protein S5 domain 2-like"/>
    <property type="match status" value="1"/>
</dbReference>
<dbReference type="SUPFAM" id="SSF50447">
    <property type="entry name" value="Translation proteins"/>
    <property type="match status" value="1"/>
</dbReference>
<dbReference type="PROSITE" id="PS51722">
    <property type="entry name" value="G_TR_2"/>
    <property type="match status" value="1"/>
</dbReference>
<organism>
    <name type="scientific">Bos taurus</name>
    <name type="common">Bovine</name>
    <dbReference type="NCBI Taxonomy" id="9913"/>
    <lineage>
        <taxon>Eukaryota</taxon>
        <taxon>Metazoa</taxon>
        <taxon>Chordata</taxon>
        <taxon>Craniata</taxon>
        <taxon>Vertebrata</taxon>
        <taxon>Euteleostomi</taxon>
        <taxon>Mammalia</taxon>
        <taxon>Eutheria</taxon>
        <taxon>Laurasiatheria</taxon>
        <taxon>Artiodactyla</taxon>
        <taxon>Ruminantia</taxon>
        <taxon>Pecora</taxon>
        <taxon>Bovidae</taxon>
        <taxon>Bovinae</taxon>
        <taxon>Bos</taxon>
    </lineage>
</organism>
<protein>
    <recommendedName>
        <fullName>116 kDa U5 small nuclear ribonucleoprotein component</fullName>
    </recommendedName>
    <alternativeName>
        <fullName>Elongation factor Tu GTP-binding domain protein 2</fullName>
    </alternativeName>
    <alternativeName>
        <fullName>U5 snRNP-specific protein, 116 kDa</fullName>
        <shortName>U5-116 kDa</shortName>
    </alternativeName>
</protein>
<sequence length="972" mass="109386">MDTDLYDEFGNYIGPELDSDEDDDELGRETKDLDEVDEDEDDDDVGDHDEDHPGMEVVLHEDKKYYPTAEEVYGPEVETIVQEEDTQPLTEPIIKPVKTKKFTLMEQTLPVTVYEMDSLADLMDNSELIRNVTLCGHLHHGKTCFVDCLIEQTHPEIRKRYDQDLCYTDILFTEQERGVGIKSTPVTVVLPDTKGKSYLFNIMDTPGHVNFSDEVTAGLRISDGVVLFIDAAEGVMLNTERLIKHAVQERLAVTVCINKIDRLILELKLPPTDAYYKLRHIVDEVNGLISMYSTDENLILSPLLGNVCFSSSQYSICFTLGSFAKIYADTFGDINYQEFAKRLWGDIYFNPKTRKFTKKAPTSSSQRSFVEFILEPLYKILAQVVGDVDTSLPRTLDELGIHLTKEELKLNIRPLLRLVCKKFFGEFTGFVDMCVQHIPSPKVGAKPKIEHTYTGGVDSDLGEAMSDCDPDGPLMCHTTKMYSTDDGVQFHAFGRVLSGTIHAGQPVKVLGENYTLEDEEDSQICTVGRLWISVARYHIEVNRVPAGNWVLIEGVDQPIVKTATITEPRGNEEAQIFRPLKFNTTSVIKIAVEPVNPSELPKMLDGLRKVNKSYPSLTTKVEESGEHVILGTGELYLDCVMHDLRKMYSEIDIKVADPVVTFCETVVETSSLKCFAETPNKKNKITMIAEPLEKGLAEDIENEVVQITWNRKKLGEFFQTKYDWDLLAARSIWAFGPDATGPNILVDDTLPSEVDKALLGSVKDSIVQGFQWGTREGPLCDELIRNVKFKILDAVVAQEPLHRGGGQIIPTARRVVYSAFLMATPRLMEPYYFVEVQAPADCVSAVYTVLARRRGHVTQDAPIPGSPLYTIKAFIPAIDSFGFETDLRTHTQGQAFSLSVFHHWQIVPGDPLDKSIVIRPLEPQPAPHLAREFMIKTRRRKGLSEDVSISKFFDDPMLLELAKQDVVLNYPM</sequence>
<feature type="chain" id="PRO_0000315996" description="116 kDa U5 small nuclear ribonucleoprotein component">
    <location>
        <begin position="1"/>
        <end position="972"/>
    </location>
</feature>
<feature type="domain" description="tr-type G" evidence="3">
    <location>
        <begin position="127"/>
        <end position="409"/>
    </location>
</feature>
<feature type="region of interest" description="Disordered" evidence="4">
    <location>
        <begin position="1"/>
        <end position="53"/>
    </location>
</feature>
<feature type="compositionally biased region" description="Acidic residues" evidence="4">
    <location>
        <begin position="17"/>
        <end position="26"/>
    </location>
</feature>
<feature type="compositionally biased region" description="Acidic residues" evidence="4">
    <location>
        <begin position="34"/>
        <end position="48"/>
    </location>
</feature>
<feature type="binding site" evidence="2">
    <location>
        <begin position="136"/>
        <end position="143"/>
    </location>
    <ligand>
        <name>GTP</name>
        <dbReference type="ChEBI" id="CHEBI:37565"/>
    </ligand>
</feature>
<feature type="binding site" evidence="2">
    <location>
        <begin position="204"/>
        <end position="208"/>
    </location>
    <ligand>
        <name>GTP</name>
        <dbReference type="ChEBI" id="CHEBI:37565"/>
    </ligand>
</feature>
<feature type="binding site" evidence="2">
    <location>
        <begin position="258"/>
        <end position="261"/>
    </location>
    <ligand>
        <name>GTP</name>
        <dbReference type="ChEBI" id="CHEBI:37565"/>
    </ligand>
</feature>
<feature type="modified residue" description="N-acetylmethionine" evidence="1">
    <location>
        <position position="1"/>
    </location>
</feature>
<feature type="modified residue" description="Phosphoserine" evidence="1">
    <location>
        <position position="19"/>
    </location>
</feature>
<feature type="modified residue" description="Phosphothreonine" evidence="1">
    <location>
        <position position="86"/>
    </location>
</feature>
<feature type="cross-link" description="Glycyl lysine isopeptide (Lys-Gly) (interchain with G-Cter in SUMO1); alternate" evidence="1">
    <location>
        <position position="64"/>
    </location>
</feature>
<feature type="cross-link" description="Glycyl lysine isopeptide (Lys-Gly) (interchain with G-Cter in SUMO2); alternate" evidence="1">
    <location>
        <position position="64"/>
    </location>
</feature>
<accession>A4FUD3</accession>
<name>U5S1_BOVIN</name>
<comment type="function">
    <text evidence="1">Required for pre-mRNA splicing as component of the spliceosome, including pre-catalytic, catalytic and post-catalytic spliceosomal complexes (By similarity). Component of the U5 snRNP and the U4/U6-U5 tri-snRNP complex, a building block of the spliceosome (By similarity). As a component of the minor spliceosome, involved in the splicing of U12-type introns in pre-mRNAs (By similarity).</text>
</comment>
<comment type="subunit">
    <text evidence="1">Component of the U5 snRNP and the U4/U6-U5 tri-snRNP complex, a building block of the spliceosome (By similarity). The U4/U6-U5 tri-snRNP complex is composed of the U4, U6 and U5 snRNAs and at least PRPF3, PRPF4, PRPF6, PRPF8, PRPF31, SNRNP200, TXNL4A, SNRNP40, DDX23, CD2BP2, PPIH, SNU13, EFTUD2, SART1 and USP39 (By similarity). Component of the pre-catalytic, catalytic and post-catalytic spliceosome complexes (By similarity). Component of the minor spliceosome, which splices U12-type introns. Within this complex, interacts with CRIPT (By similarity). Interacts with ERBB4 and PRPF8 (By similarity). Interacts with PIH1D1 (By similarity). Interacts with RPAP3 and URI1 in a ZNHIT2-dependent manner (By similarity). Interacts with NRDE2 (By similarity). Interacts with FAM50A (By similarity). Interacts with UBL5 (By similarity).</text>
</comment>
<comment type="subcellular location">
    <subcellularLocation>
        <location evidence="1">Nucleus</location>
    </subcellularLocation>
</comment>
<comment type="similarity">
    <text evidence="3">Belongs to the TRAFAC class translation factor GTPase superfamily. Classic translation factor GTPase family. EF-G/EF-2 subfamily.</text>
</comment>
<evidence type="ECO:0000250" key="1">
    <source>
        <dbReference type="UniProtKB" id="Q15029"/>
    </source>
</evidence>
<evidence type="ECO:0000255" key="2"/>
<evidence type="ECO:0000255" key="3">
    <source>
        <dbReference type="PROSITE-ProRule" id="PRU01059"/>
    </source>
</evidence>
<evidence type="ECO:0000256" key="4">
    <source>
        <dbReference type="SAM" id="MobiDB-lite"/>
    </source>
</evidence>
<proteinExistence type="evidence at transcript level"/>
<keyword id="KW-0007">Acetylation</keyword>
<keyword id="KW-0342">GTP-binding</keyword>
<keyword id="KW-1017">Isopeptide bond</keyword>
<keyword id="KW-0507">mRNA processing</keyword>
<keyword id="KW-0508">mRNA splicing</keyword>
<keyword id="KW-0547">Nucleotide-binding</keyword>
<keyword id="KW-0539">Nucleus</keyword>
<keyword id="KW-0597">Phosphoprotein</keyword>
<keyword id="KW-1185">Reference proteome</keyword>
<keyword id="KW-0747">Spliceosome</keyword>
<keyword id="KW-0832">Ubl conjugation</keyword>